<sequence length="101" mass="11499">MAKTSMIHRDIKRAKLAKKFAGKRDALKKILSSQDASYEEKIDASTKLQKLPRDSSPSRHRNRCELSGRPRGVYRKFGLGRNMLRKATMNGDVPGLRKASW</sequence>
<protein>
    <recommendedName>
        <fullName evidence="1">Small ribosomal subunit protein uS14</fullName>
    </recommendedName>
    <alternativeName>
        <fullName evidence="3">30S ribosomal protein S14</fullName>
    </alternativeName>
</protein>
<keyword id="KW-0687">Ribonucleoprotein</keyword>
<keyword id="KW-0689">Ribosomal protein</keyword>
<keyword id="KW-0694">RNA-binding</keyword>
<keyword id="KW-0699">rRNA-binding</keyword>
<gene>
    <name evidence="1" type="primary">rpsN</name>
    <name type="ordered locus">xcc-b100_3446</name>
</gene>
<evidence type="ECO:0000255" key="1">
    <source>
        <dbReference type="HAMAP-Rule" id="MF_00537"/>
    </source>
</evidence>
<evidence type="ECO:0000256" key="2">
    <source>
        <dbReference type="SAM" id="MobiDB-lite"/>
    </source>
</evidence>
<evidence type="ECO:0000305" key="3"/>
<dbReference type="EMBL" id="AM920689">
    <property type="protein sequence ID" value="CAP52811.1"/>
    <property type="molecule type" value="Genomic_DNA"/>
</dbReference>
<dbReference type="SMR" id="B0RU69"/>
<dbReference type="KEGG" id="xca:xcc-b100_3446"/>
<dbReference type="HOGENOM" id="CLU_139869_0_1_6"/>
<dbReference type="Proteomes" id="UP000001188">
    <property type="component" value="Chromosome"/>
</dbReference>
<dbReference type="GO" id="GO:0005737">
    <property type="term" value="C:cytoplasm"/>
    <property type="evidence" value="ECO:0007669"/>
    <property type="project" value="UniProtKB-ARBA"/>
</dbReference>
<dbReference type="GO" id="GO:0015935">
    <property type="term" value="C:small ribosomal subunit"/>
    <property type="evidence" value="ECO:0007669"/>
    <property type="project" value="TreeGrafter"/>
</dbReference>
<dbReference type="GO" id="GO:0019843">
    <property type="term" value="F:rRNA binding"/>
    <property type="evidence" value="ECO:0007669"/>
    <property type="project" value="UniProtKB-UniRule"/>
</dbReference>
<dbReference type="GO" id="GO:0003735">
    <property type="term" value="F:structural constituent of ribosome"/>
    <property type="evidence" value="ECO:0007669"/>
    <property type="project" value="InterPro"/>
</dbReference>
<dbReference type="GO" id="GO:0006412">
    <property type="term" value="P:translation"/>
    <property type="evidence" value="ECO:0007669"/>
    <property type="project" value="UniProtKB-UniRule"/>
</dbReference>
<dbReference type="FunFam" id="1.10.287.1480:FF:000001">
    <property type="entry name" value="30S ribosomal protein S14"/>
    <property type="match status" value="1"/>
</dbReference>
<dbReference type="Gene3D" id="1.10.287.1480">
    <property type="match status" value="1"/>
</dbReference>
<dbReference type="HAMAP" id="MF_00537">
    <property type="entry name" value="Ribosomal_uS14_1"/>
    <property type="match status" value="1"/>
</dbReference>
<dbReference type="InterPro" id="IPR001209">
    <property type="entry name" value="Ribosomal_uS14"/>
</dbReference>
<dbReference type="InterPro" id="IPR023036">
    <property type="entry name" value="Ribosomal_uS14_bac/plastid"/>
</dbReference>
<dbReference type="NCBIfam" id="NF006477">
    <property type="entry name" value="PRK08881.1"/>
    <property type="match status" value="1"/>
</dbReference>
<dbReference type="PANTHER" id="PTHR19836">
    <property type="entry name" value="30S RIBOSOMAL PROTEIN S14"/>
    <property type="match status" value="1"/>
</dbReference>
<dbReference type="PANTHER" id="PTHR19836:SF19">
    <property type="entry name" value="SMALL RIBOSOMAL SUBUNIT PROTEIN US14M"/>
    <property type="match status" value="1"/>
</dbReference>
<dbReference type="Pfam" id="PF00253">
    <property type="entry name" value="Ribosomal_S14"/>
    <property type="match status" value="1"/>
</dbReference>
<dbReference type="SUPFAM" id="SSF57716">
    <property type="entry name" value="Glucocorticoid receptor-like (DNA-binding domain)"/>
    <property type="match status" value="1"/>
</dbReference>
<accession>B0RU69</accession>
<comment type="function">
    <text evidence="1">Binds 16S rRNA, required for the assembly of 30S particles and may also be responsible for determining the conformation of the 16S rRNA at the A site.</text>
</comment>
<comment type="subunit">
    <text evidence="1">Part of the 30S ribosomal subunit. Contacts proteins S3 and S10.</text>
</comment>
<comment type="similarity">
    <text evidence="1">Belongs to the universal ribosomal protein uS14 family.</text>
</comment>
<reference key="1">
    <citation type="journal article" date="2008" name="J. Biotechnol.">
        <title>The genome of Xanthomonas campestris pv. campestris B100 and its use for the reconstruction of metabolic pathways involved in xanthan biosynthesis.</title>
        <authorList>
            <person name="Vorhoelter F.-J."/>
            <person name="Schneiker S."/>
            <person name="Goesmann A."/>
            <person name="Krause L."/>
            <person name="Bekel T."/>
            <person name="Kaiser O."/>
            <person name="Linke B."/>
            <person name="Patschkowski T."/>
            <person name="Rueckert C."/>
            <person name="Schmid J."/>
            <person name="Sidhu V.K."/>
            <person name="Sieber V."/>
            <person name="Tauch A."/>
            <person name="Watt S.A."/>
            <person name="Weisshaar B."/>
            <person name="Becker A."/>
            <person name="Niehaus K."/>
            <person name="Puehler A."/>
        </authorList>
    </citation>
    <scope>NUCLEOTIDE SEQUENCE [LARGE SCALE GENOMIC DNA]</scope>
    <source>
        <strain>B100</strain>
    </source>
</reference>
<proteinExistence type="inferred from homology"/>
<name>RS14_XANCB</name>
<organism>
    <name type="scientific">Xanthomonas campestris pv. campestris (strain B100)</name>
    <dbReference type="NCBI Taxonomy" id="509169"/>
    <lineage>
        <taxon>Bacteria</taxon>
        <taxon>Pseudomonadati</taxon>
        <taxon>Pseudomonadota</taxon>
        <taxon>Gammaproteobacteria</taxon>
        <taxon>Lysobacterales</taxon>
        <taxon>Lysobacteraceae</taxon>
        <taxon>Xanthomonas</taxon>
    </lineage>
</organism>
<feature type="chain" id="PRO_1000128641" description="Small ribosomal subunit protein uS14">
    <location>
        <begin position="1"/>
        <end position="101"/>
    </location>
</feature>
<feature type="region of interest" description="Disordered" evidence="2">
    <location>
        <begin position="33"/>
        <end position="69"/>
    </location>
</feature>
<feature type="compositionally biased region" description="Basic and acidic residues" evidence="2">
    <location>
        <begin position="51"/>
        <end position="68"/>
    </location>
</feature>